<name>RL21_BREBN</name>
<feature type="chain" id="PRO_1000166705" description="Large ribosomal subunit protein bL21">
    <location>
        <begin position="1"/>
        <end position="103"/>
    </location>
</feature>
<gene>
    <name evidence="1" type="primary">rplU</name>
    <name type="ordered locus">BBR47_18450</name>
</gene>
<organism>
    <name type="scientific">Brevibacillus brevis (strain 47 / JCM 6285 / NBRC 100599)</name>
    <dbReference type="NCBI Taxonomy" id="358681"/>
    <lineage>
        <taxon>Bacteria</taxon>
        <taxon>Bacillati</taxon>
        <taxon>Bacillota</taxon>
        <taxon>Bacilli</taxon>
        <taxon>Bacillales</taxon>
        <taxon>Paenibacillaceae</taxon>
        <taxon>Brevibacillus</taxon>
    </lineage>
</organism>
<sequence>MYAIIETGGKQYKVEEGAVLFIEKLADVEGEVVTFDKVLLVSKDGKVTAGAPTVAGATVTGKVEKHGKAKKIIVYKYKAKKNYRRKQGHRQPFTKVVIEKINA</sequence>
<comment type="function">
    <text evidence="1">This protein binds to 23S rRNA in the presence of protein L20.</text>
</comment>
<comment type="subunit">
    <text evidence="1">Part of the 50S ribosomal subunit. Contacts protein L20.</text>
</comment>
<comment type="similarity">
    <text evidence="1">Belongs to the bacterial ribosomal protein bL21 family.</text>
</comment>
<dbReference type="EMBL" id="AP008955">
    <property type="protein sequence ID" value="BAH42822.1"/>
    <property type="molecule type" value="Genomic_DNA"/>
</dbReference>
<dbReference type="RefSeq" id="WP_012685563.1">
    <property type="nucleotide sequence ID" value="NC_012491.1"/>
</dbReference>
<dbReference type="SMR" id="C0ZAL3"/>
<dbReference type="STRING" id="358681.BBR47_18450"/>
<dbReference type="KEGG" id="bbe:BBR47_18450"/>
<dbReference type="eggNOG" id="COG0261">
    <property type="taxonomic scope" value="Bacteria"/>
</dbReference>
<dbReference type="HOGENOM" id="CLU_061463_3_2_9"/>
<dbReference type="Proteomes" id="UP000001877">
    <property type="component" value="Chromosome"/>
</dbReference>
<dbReference type="GO" id="GO:0005737">
    <property type="term" value="C:cytoplasm"/>
    <property type="evidence" value="ECO:0007669"/>
    <property type="project" value="UniProtKB-ARBA"/>
</dbReference>
<dbReference type="GO" id="GO:1990904">
    <property type="term" value="C:ribonucleoprotein complex"/>
    <property type="evidence" value="ECO:0007669"/>
    <property type="project" value="UniProtKB-KW"/>
</dbReference>
<dbReference type="GO" id="GO:0005840">
    <property type="term" value="C:ribosome"/>
    <property type="evidence" value="ECO:0007669"/>
    <property type="project" value="UniProtKB-KW"/>
</dbReference>
<dbReference type="GO" id="GO:0019843">
    <property type="term" value="F:rRNA binding"/>
    <property type="evidence" value="ECO:0007669"/>
    <property type="project" value="UniProtKB-UniRule"/>
</dbReference>
<dbReference type="GO" id="GO:0003735">
    <property type="term" value="F:structural constituent of ribosome"/>
    <property type="evidence" value="ECO:0007669"/>
    <property type="project" value="InterPro"/>
</dbReference>
<dbReference type="GO" id="GO:0006412">
    <property type="term" value="P:translation"/>
    <property type="evidence" value="ECO:0007669"/>
    <property type="project" value="UniProtKB-UniRule"/>
</dbReference>
<dbReference type="HAMAP" id="MF_01363">
    <property type="entry name" value="Ribosomal_bL21"/>
    <property type="match status" value="1"/>
</dbReference>
<dbReference type="InterPro" id="IPR028909">
    <property type="entry name" value="bL21-like"/>
</dbReference>
<dbReference type="InterPro" id="IPR036164">
    <property type="entry name" value="bL21-like_sf"/>
</dbReference>
<dbReference type="InterPro" id="IPR001787">
    <property type="entry name" value="Ribosomal_bL21"/>
</dbReference>
<dbReference type="InterPro" id="IPR018258">
    <property type="entry name" value="Ribosomal_bL21_CS"/>
</dbReference>
<dbReference type="NCBIfam" id="TIGR00061">
    <property type="entry name" value="L21"/>
    <property type="match status" value="1"/>
</dbReference>
<dbReference type="PANTHER" id="PTHR21349">
    <property type="entry name" value="50S RIBOSOMAL PROTEIN L21"/>
    <property type="match status" value="1"/>
</dbReference>
<dbReference type="PANTHER" id="PTHR21349:SF0">
    <property type="entry name" value="LARGE RIBOSOMAL SUBUNIT PROTEIN BL21M"/>
    <property type="match status" value="1"/>
</dbReference>
<dbReference type="Pfam" id="PF00829">
    <property type="entry name" value="Ribosomal_L21p"/>
    <property type="match status" value="1"/>
</dbReference>
<dbReference type="SUPFAM" id="SSF141091">
    <property type="entry name" value="L21p-like"/>
    <property type="match status" value="1"/>
</dbReference>
<dbReference type="PROSITE" id="PS01169">
    <property type="entry name" value="RIBOSOMAL_L21"/>
    <property type="match status" value="1"/>
</dbReference>
<proteinExistence type="inferred from homology"/>
<accession>C0ZAL3</accession>
<protein>
    <recommendedName>
        <fullName evidence="1">Large ribosomal subunit protein bL21</fullName>
    </recommendedName>
    <alternativeName>
        <fullName evidence="2">50S ribosomal protein L21</fullName>
    </alternativeName>
</protein>
<keyword id="KW-1185">Reference proteome</keyword>
<keyword id="KW-0687">Ribonucleoprotein</keyword>
<keyword id="KW-0689">Ribosomal protein</keyword>
<keyword id="KW-0694">RNA-binding</keyword>
<keyword id="KW-0699">rRNA-binding</keyword>
<evidence type="ECO:0000255" key="1">
    <source>
        <dbReference type="HAMAP-Rule" id="MF_01363"/>
    </source>
</evidence>
<evidence type="ECO:0000305" key="2"/>
<reference key="1">
    <citation type="submission" date="2005-03" db="EMBL/GenBank/DDBJ databases">
        <title>Brevibacillus brevis strain 47, complete genome.</title>
        <authorList>
            <person name="Hosoyama A."/>
            <person name="Yamada R."/>
            <person name="Hongo Y."/>
            <person name="Terui Y."/>
            <person name="Ankai A."/>
            <person name="Masuyama W."/>
            <person name="Sekiguchi M."/>
            <person name="Takeda T."/>
            <person name="Asano K."/>
            <person name="Ohji S."/>
            <person name="Ichikawa N."/>
            <person name="Narita S."/>
            <person name="Aoki N."/>
            <person name="Miura H."/>
            <person name="Matsushita S."/>
            <person name="Sekigawa T."/>
            <person name="Yamagata H."/>
            <person name="Yoshikawa H."/>
            <person name="Udaka S."/>
            <person name="Tanikawa S."/>
            <person name="Fujita N."/>
        </authorList>
    </citation>
    <scope>NUCLEOTIDE SEQUENCE [LARGE SCALE GENOMIC DNA]</scope>
    <source>
        <strain>47 / JCM 6285 / NBRC 100599</strain>
    </source>
</reference>